<evidence type="ECO:0000255" key="1">
    <source>
        <dbReference type="HAMAP-Rule" id="MF_00304"/>
    </source>
</evidence>
<evidence type="ECO:0000305" key="2"/>
<dbReference type="EC" id="2.4.2.59" evidence="1"/>
<dbReference type="EMBL" id="BA000001">
    <property type="protein sequence ID" value="BAA30463.1"/>
    <property type="status" value="ALT_INIT"/>
    <property type="molecule type" value="Genomic_DNA"/>
</dbReference>
<dbReference type="PIR" id="G71007">
    <property type="entry name" value="G71007"/>
</dbReference>
<dbReference type="RefSeq" id="WP_048053375.1">
    <property type="nucleotide sequence ID" value="NC_000961.1"/>
</dbReference>
<dbReference type="SMR" id="O59082"/>
<dbReference type="STRING" id="70601.gene:9378333"/>
<dbReference type="EnsemblBacteria" id="BAA30463">
    <property type="protein sequence ID" value="BAA30463"/>
    <property type="gene ID" value="BAA30463"/>
</dbReference>
<dbReference type="GeneID" id="1443683"/>
<dbReference type="KEGG" id="pho:PH1357"/>
<dbReference type="eggNOG" id="arCOG00574">
    <property type="taxonomic scope" value="Archaea"/>
</dbReference>
<dbReference type="OrthoDB" id="4240at2157"/>
<dbReference type="UniPathway" id="UPA00060"/>
<dbReference type="Proteomes" id="UP000000752">
    <property type="component" value="Chromosome"/>
</dbReference>
<dbReference type="GO" id="GO:0005506">
    <property type="term" value="F:iron ion binding"/>
    <property type="evidence" value="ECO:0007669"/>
    <property type="project" value="UniProtKB-UniRule"/>
</dbReference>
<dbReference type="GO" id="GO:0016763">
    <property type="term" value="F:pentosyltransferase activity"/>
    <property type="evidence" value="ECO:0007669"/>
    <property type="project" value="UniProtKB-UniRule"/>
</dbReference>
<dbReference type="GO" id="GO:0009228">
    <property type="term" value="P:thiamine biosynthetic process"/>
    <property type="evidence" value="ECO:0007669"/>
    <property type="project" value="UniProtKB-KW"/>
</dbReference>
<dbReference type="GO" id="GO:0009229">
    <property type="term" value="P:thiamine diphosphate biosynthetic process"/>
    <property type="evidence" value="ECO:0007669"/>
    <property type="project" value="UniProtKB-UniRule"/>
</dbReference>
<dbReference type="GO" id="GO:0052837">
    <property type="term" value="P:thiazole biosynthetic process"/>
    <property type="evidence" value="ECO:0007669"/>
    <property type="project" value="UniProtKB-UniRule"/>
</dbReference>
<dbReference type="Gene3D" id="3.50.50.60">
    <property type="entry name" value="FAD/NAD(P)-binding domain"/>
    <property type="match status" value="1"/>
</dbReference>
<dbReference type="HAMAP" id="MF_00304">
    <property type="entry name" value="Thi4"/>
    <property type="match status" value="1"/>
</dbReference>
<dbReference type="InterPro" id="IPR036188">
    <property type="entry name" value="FAD/NAD-bd_sf"/>
</dbReference>
<dbReference type="InterPro" id="IPR002922">
    <property type="entry name" value="Thi4_fam"/>
</dbReference>
<dbReference type="InterPro" id="IPR022828">
    <property type="entry name" value="Thi4_prok"/>
</dbReference>
<dbReference type="NCBIfam" id="TIGR00292">
    <property type="entry name" value="sulfide-dependent adenosine diphosphate thiazole synthase"/>
    <property type="match status" value="1"/>
</dbReference>
<dbReference type="PANTHER" id="PTHR43422">
    <property type="entry name" value="THIAMINE THIAZOLE SYNTHASE"/>
    <property type="match status" value="1"/>
</dbReference>
<dbReference type="PANTHER" id="PTHR43422:SF3">
    <property type="entry name" value="THIAMINE THIAZOLE SYNTHASE"/>
    <property type="match status" value="1"/>
</dbReference>
<dbReference type="Pfam" id="PF01946">
    <property type="entry name" value="Thi4"/>
    <property type="match status" value="1"/>
</dbReference>
<dbReference type="PRINTS" id="PR00420">
    <property type="entry name" value="RNGMNOXGNASE"/>
</dbReference>
<dbReference type="SUPFAM" id="SSF51905">
    <property type="entry name" value="FAD/NAD(P)-binding domain"/>
    <property type="match status" value="1"/>
</dbReference>
<organism>
    <name type="scientific">Pyrococcus horikoshii (strain ATCC 700860 / DSM 12428 / JCM 9974 / NBRC 100139 / OT-3)</name>
    <dbReference type="NCBI Taxonomy" id="70601"/>
    <lineage>
        <taxon>Archaea</taxon>
        <taxon>Methanobacteriati</taxon>
        <taxon>Methanobacteriota</taxon>
        <taxon>Thermococci</taxon>
        <taxon>Thermococcales</taxon>
        <taxon>Thermococcaceae</taxon>
        <taxon>Pyrococcus</taxon>
    </lineage>
</organism>
<keyword id="KW-0408">Iron</keyword>
<keyword id="KW-0479">Metal-binding</keyword>
<keyword id="KW-0520">NAD</keyword>
<keyword id="KW-0784">Thiamine biosynthesis</keyword>
<keyword id="KW-0808">Transferase</keyword>
<name>THI4_PYRHO</name>
<protein>
    <recommendedName>
        <fullName evidence="1">Thiamine thiazole synthase</fullName>
        <ecNumber evidence="1">2.4.2.59</ecNumber>
    </recommendedName>
</protein>
<accession>O59082</accession>
<feature type="chain" id="PRO_0000153953" description="Thiamine thiazole synthase">
    <location>
        <begin position="1"/>
        <end position="252"/>
    </location>
</feature>
<feature type="binding site" description="in other chain" evidence="1">
    <location>
        <position position="35"/>
    </location>
    <ligand>
        <name>NAD(+)</name>
        <dbReference type="ChEBI" id="CHEBI:57540"/>
        <note>ligand shared between two adjacent protomers</note>
    </ligand>
</feature>
<feature type="binding site" description="in other chain" evidence="1">
    <location>
        <begin position="54"/>
        <end position="55"/>
    </location>
    <ligand>
        <name>NAD(+)</name>
        <dbReference type="ChEBI" id="CHEBI:57540"/>
        <note>ligand shared between two adjacent protomers</note>
    </ligand>
</feature>
<feature type="binding site" description="in other chain" evidence="1">
    <location>
        <position position="62"/>
    </location>
    <ligand>
        <name>NAD(+)</name>
        <dbReference type="ChEBI" id="CHEBI:57540"/>
        <note>ligand shared between two adjacent protomers</note>
    </ligand>
</feature>
<feature type="binding site" description="in other chain" evidence="1">
    <location>
        <position position="126"/>
    </location>
    <ligand>
        <name>NAD(+)</name>
        <dbReference type="ChEBI" id="CHEBI:57540"/>
        <note>ligand shared between two adjacent protomers</note>
    </ligand>
</feature>
<feature type="binding site" evidence="1">
    <location>
        <begin position="152"/>
        <end position="154"/>
    </location>
    <ligand>
        <name>NAD(+)</name>
        <dbReference type="ChEBI" id="CHEBI:57540"/>
        <note>ligand shared between two adjacent protomers</note>
    </ligand>
</feature>
<feature type="binding site" evidence="1">
    <location>
        <position position="154"/>
    </location>
    <ligand>
        <name>Fe cation</name>
        <dbReference type="ChEBI" id="CHEBI:24875"/>
        <note>ligand shared between two adjacent protomers</note>
    </ligand>
</feature>
<feature type="binding site" description="in other chain" evidence="1">
    <location>
        <position position="169"/>
    </location>
    <ligand>
        <name>Fe cation</name>
        <dbReference type="ChEBI" id="CHEBI:24875"/>
        <note>ligand shared between two adjacent protomers</note>
    </ligand>
</feature>
<feature type="binding site" description="in other chain" evidence="1">
    <location>
        <position position="217"/>
    </location>
    <ligand>
        <name>NAD(+)</name>
        <dbReference type="ChEBI" id="CHEBI:57540"/>
        <note>ligand shared between two adjacent protomers</note>
    </ligand>
</feature>
<feature type="binding site" evidence="1">
    <location>
        <position position="227"/>
    </location>
    <ligand>
        <name>glycine</name>
        <dbReference type="ChEBI" id="CHEBI:57305"/>
    </ligand>
</feature>
<reference key="1">
    <citation type="journal article" date="1998" name="DNA Res.">
        <title>Complete sequence and gene organization of the genome of a hyper-thermophilic archaebacterium, Pyrococcus horikoshii OT3.</title>
        <authorList>
            <person name="Kawarabayasi Y."/>
            <person name="Sawada M."/>
            <person name="Horikawa H."/>
            <person name="Haikawa Y."/>
            <person name="Hino Y."/>
            <person name="Yamamoto S."/>
            <person name="Sekine M."/>
            <person name="Baba S."/>
            <person name="Kosugi H."/>
            <person name="Hosoyama A."/>
            <person name="Nagai Y."/>
            <person name="Sakai M."/>
            <person name="Ogura K."/>
            <person name="Otsuka R."/>
            <person name="Nakazawa H."/>
            <person name="Takamiya M."/>
            <person name="Ohfuku Y."/>
            <person name="Funahashi T."/>
            <person name="Tanaka T."/>
            <person name="Kudoh Y."/>
            <person name="Yamazaki J."/>
            <person name="Kushida N."/>
            <person name="Oguchi A."/>
            <person name="Aoki K."/>
            <person name="Yoshizawa T."/>
            <person name="Nakamura Y."/>
            <person name="Robb F.T."/>
            <person name="Horikoshi K."/>
            <person name="Masuchi Y."/>
            <person name="Shizuya H."/>
            <person name="Kikuchi H."/>
        </authorList>
    </citation>
    <scope>NUCLEOTIDE SEQUENCE [LARGE SCALE GENOMIC DNA]</scope>
    <source>
        <strain>ATCC 700860 / DSM 12428 / JCM 9974 / NBRC 100139 / OT-3</strain>
    </source>
</reference>
<sequence length="252" mass="27245">MLREVTITRAIVESYYRDLLNNLELDVAIVGAGPSGMVAAYYLAKGGAKVAIFEKKLSIGGGIWGGGMGFNKVVVQDEAREILDEFGIRYEEFEKGYYVADAIEVATTIASKVVKSGVKIFNMIEVEDLVIKDNRVSGIVINWTPVLMAGLHVDPLTIEAKYVIDSTGHGAQVAQFLVKRGLLKEIPGEGAMWAEQGEKLTVKNTREVFPGLYVTGMAANAIAGAPRMGPIFGGMFLSGRKAAQEILKKLKS</sequence>
<comment type="function">
    <text evidence="1">Involved in the biosynthesis of the thiazole moiety of thiamine. Catalyzes the conversion of NAD and glycine to adenosine diphosphate 5-(2-hydroxyethyl)-4-methylthiazole-2-carboxylate (ADT), an adenylated thiazole intermediate, using free sulfide as a source of sulfur.</text>
</comment>
<comment type="catalytic activity">
    <reaction evidence="1">
        <text>hydrogen sulfide + glycine + NAD(+) = ADP-5-ethyl-4-methylthiazole-2-carboxylate + nicotinamide + 3 H2O + H(+)</text>
        <dbReference type="Rhea" id="RHEA:55704"/>
        <dbReference type="ChEBI" id="CHEBI:15377"/>
        <dbReference type="ChEBI" id="CHEBI:15378"/>
        <dbReference type="ChEBI" id="CHEBI:17154"/>
        <dbReference type="ChEBI" id="CHEBI:29919"/>
        <dbReference type="ChEBI" id="CHEBI:57305"/>
        <dbReference type="ChEBI" id="CHEBI:57540"/>
        <dbReference type="ChEBI" id="CHEBI:139151"/>
        <dbReference type="EC" id="2.4.2.59"/>
    </reaction>
</comment>
<comment type="cofactor">
    <cofactor evidence="1">
        <name>Fe(2+)</name>
        <dbReference type="ChEBI" id="CHEBI:29033"/>
    </cofactor>
</comment>
<comment type="pathway">
    <text evidence="1">Cofactor biosynthesis; thiamine diphosphate biosynthesis.</text>
</comment>
<comment type="subunit">
    <text evidence="1">Homooctamer; tetramer of dimers.</text>
</comment>
<comment type="similarity">
    <text evidence="1">Belongs to the THI4 family.</text>
</comment>
<comment type="sequence caution" evidence="2">
    <conflict type="erroneous initiation">
        <sequence resource="EMBL-CDS" id="BAA30463"/>
    </conflict>
</comment>
<gene>
    <name evidence="1" type="primary">thi4</name>
    <name type="ordered locus">PH1357</name>
</gene>
<proteinExistence type="inferred from homology"/>